<dbReference type="EC" id="2.5.1.7" evidence="1"/>
<dbReference type="EMBL" id="AM286415">
    <property type="protein sequence ID" value="CAL13772.1"/>
    <property type="molecule type" value="Genomic_DNA"/>
</dbReference>
<dbReference type="RefSeq" id="WP_005162439.1">
    <property type="nucleotide sequence ID" value="NC_008800.1"/>
</dbReference>
<dbReference type="RefSeq" id="YP_001007900.1">
    <property type="nucleotide sequence ID" value="NC_008800.1"/>
</dbReference>
<dbReference type="SMR" id="A1JRA1"/>
<dbReference type="GeneID" id="31410623"/>
<dbReference type="KEGG" id="yen:YE3746"/>
<dbReference type="PATRIC" id="fig|393305.7.peg.3989"/>
<dbReference type="eggNOG" id="COG0766">
    <property type="taxonomic scope" value="Bacteria"/>
</dbReference>
<dbReference type="HOGENOM" id="CLU_027387_0_0_6"/>
<dbReference type="OrthoDB" id="9803760at2"/>
<dbReference type="UniPathway" id="UPA00219"/>
<dbReference type="Proteomes" id="UP000000642">
    <property type="component" value="Chromosome"/>
</dbReference>
<dbReference type="GO" id="GO:0005737">
    <property type="term" value="C:cytoplasm"/>
    <property type="evidence" value="ECO:0007669"/>
    <property type="project" value="UniProtKB-SubCell"/>
</dbReference>
<dbReference type="GO" id="GO:0008760">
    <property type="term" value="F:UDP-N-acetylglucosamine 1-carboxyvinyltransferase activity"/>
    <property type="evidence" value="ECO:0007669"/>
    <property type="project" value="UniProtKB-UniRule"/>
</dbReference>
<dbReference type="GO" id="GO:0051301">
    <property type="term" value="P:cell division"/>
    <property type="evidence" value="ECO:0007669"/>
    <property type="project" value="UniProtKB-KW"/>
</dbReference>
<dbReference type="GO" id="GO:0071555">
    <property type="term" value="P:cell wall organization"/>
    <property type="evidence" value="ECO:0007669"/>
    <property type="project" value="UniProtKB-KW"/>
</dbReference>
<dbReference type="GO" id="GO:0009252">
    <property type="term" value="P:peptidoglycan biosynthetic process"/>
    <property type="evidence" value="ECO:0007669"/>
    <property type="project" value="UniProtKB-UniRule"/>
</dbReference>
<dbReference type="GO" id="GO:0008360">
    <property type="term" value="P:regulation of cell shape"/>
    <property type="evidence" value="ECO:0007669"/>
    <property type="project" value="UniProtKB-KW"/>
</dbReference>
<dbReference type="GO" id="GO:0019277">
    <property type="term" value="P:UDP-N-acetylgalactosamine biosynthetic process"/>
    <property type="evidence" value="ECO:0007669"/>
    <property type="project" value="InterPro"/>
</dbReference>
<dbReference type="CDD" id="cd01555">
    <property type="entry name" value="UdpNAET"/>
    <property type="match status" value="1"/>
</dbReference>
<dbReference type="FunFam" id="3.65.10.10:FF:000002">
    <property type="entry name" value="UDP-N-acetylglucosamine 1-carboxyvinyltransferase"/>
    <property type="match status" value="1"/>
</dbReference>
<dbReference type="Gene3D" id="3.65.10.10">
    <property type="entry name" value="Enolpyruvate transferase domain"/>
    <property type="match status" value="2"/>
</dbReference>
<dbReference type="HAMAP" id="MF_00111">
    <property type="entry name" value="MurA"/>
    <property type="match status" value="1"/>
</dbReference>
<dbReference type="InterPro" id="IPR001986">
    <property type="entry name" value="Enolpyruvate_Tfrase_dom"/>
</dbReference>
<dbReference type="InterPro" id="IPR036968">
    <property type="entry name" value="Enolpyruvate_Tfrase_sf"/>
</dbReference>
<dbReference type="InterPro" id="IPR050068">
    <property type="entry name" value="MurA_subfamily"/>
</dbReference>
<dbReference type="InterPro" id="IPR013792">
    <property type="entry name" value="RNA3'P_cycl/enolpyr_Trfase_a/b"/>
</dbReference>
<dbReference type="InterPro" id="IPR005750">
    <property type="entry name" value="UDP_GlcNAc_COvinyl_MurA"/>
</dbReference>
<dbReference type="NCBIfam" id="TIGR01072">
    <property type="entry name" value="murA"/>
    <property type="match status" value="1"/>
</dbReference>
<dbReference type="NCBIfam" id="NF006873">
    <property type="entry name" value="PRK09369.1"/>
    <property type="match status" value="1"/>
</dbReference>
<dbReference type="PANTHER" id="PTHR43783">
    <property type="entry name" value="UDP-N-ACETYLGLUCOSAMINE 1-CARBOXYVINYLTRANSFERASE"/>
    <property type="match status" value="1"/>
</dbReference>
<dbReference type="PANTHER" id="PTHR43783:SF1">
    <property type="entry name" value="UDP-N-ACETYLGLUCOSAMINE 1-CARBOXYVINYLTRANSFERASE"/>
    <property type="match status" value="1"/>
</dbReference>
<dbReference type="Pfam" id="PF00275">
    <property type="entry name" value="EPSP_synthase"/>
    <property type="match status" value="1"/>
</dbReference>
<dbReference type="SUPFAM" id="SSF55205">
    <property type="entry name" value="EPT/RTPC-like"/>
    <property type="match status" value="1"/>
</dbReference>
<evidence type="ECO:0000255" key="1">
    <source>
        <dbReference type="HAMAP-Rule" id="MF_00111"/>
    </source>
</evidence>
<keyword id="KW-0131">Cell cycle</keyword>
<keyword id="KW-0132">Cell division</keyword>
<keyword id="KW-0133">Cell shape</keyword>
<keyword id="KW-0961">Cell wall biogenesis/degradation</keyword>
<keyword id="KW-0963">Cytoplasm</keyword>
<keyword id="KW-0573">Peptidoglycan synthesis</keyword>
<keyword id="KW-0670">Pyruvate</keyword>
<keyword id="KW-0808">Transferase</keyword>
<comment type="function">
    <text evidence="1">Cell wall formation. Adds enolpyruvyl to UDP-N-acetylglucosamine.</text>
</comment>
<comment type="catalytic activity">
    <reaction evidence="1">
        <text>phosphoenolpyruvate + UDP-N-acetyl-alpha-D-glucosamine = UDP-N-acetyl-3-O-(1-carboxyvinyl)-alpha-D-glucosamine + phosphate</text>
        <dbReference type="Rhea" id="RHEA:18681"/>
        <dbReference type="ChEBI" id="CHEBI:43474"/>
        <dbReference type="ChEBI" id="CHEBI:57705"/>
        <dbReference type="ChEBI" id="CHEBI:58702"/>
        <dbReference type="ChEBI" id="CHEBI:68483"/>
        <dbReference type="EC" id="2.5.1.7"/>
    </reaction>
</comment>
<comment type="pathway">
    <text evidence="1">Cell wall biogenesis; peptidoglycan biosynthesis.</text>
</comment>
<comment type="subcellular location">
    <subcellularLocation>
        <location evidence="1">Cytoplasm</location>
    </subcellularLocation>
</comment>
<comment type="similarity">
    <text evidence="1">Belongs to the EPSP synthase family. MurA subfamily.</text>
</comment>
<name>MURA_YERE8</name>
<reference key="1">
    <citation type="journal article" date="2006" name="PLoS Genet.">
        <title>The complete genome sequence and comparative genome analysis of the high pathogenicity Yersinia enterocolitica strain 8081.</title>
        <authorList>
            <person name="Thomson N.R."/>
            <person name="Howard S."/>
            <person name="Wren B.W."/>
            <person name="Holden M.T.G."/>
            <person name="Crossman L."/>
            <person name="Challis G.L."/>
            <person name="Churcher C."/>
            <person name="Mungall K."/>
            <person name="Brooks K."/>
            <person name="Chillingworth T."/>
            <person name="Feltwell T."/>
            <person name="Abdellah Z."/>
            <person name="Hauser H."/>
            <person name="Jagels K."/>
            <person name="Maddison M."/>
            <person name="Moule S."/>
            <person name="Sanders M."/>
            <person name="Whitehead S."/>
            <person name="Quail M.A."/>
            <person name="Dougan G."/>
            <person name="Parkhill J."/>
            <person name="Prentice M.B."/>
        </authorList>
    </citation>
    <scope>NUCLEOTIDE SEQUENCE [LARGE SCALE GENOMIC DNA]</scope>
    <source>
        <strain>NCTC 13174 / 8081</strain>
    </source>
</reference>
<gene>
    <name evidence="1" type="primary">murA</name>
    <name type="ordered locus">YE3746</name>
</gene>
<protein>
    <recommendedName>
        <fullName evidence="1">UDP-N-acetylglucosamine 1-carboxyvinyltransferase</fullName>
        <ecNumber evidence="1">2.5.1.7</ecNumber>
    </recommendedName>
    <alternativeName>
        <fullName evidence="1">Enoylpyruvate transferase</fullName>
    </alternativeName>
    <alternativeName>
        <fullName evidence="1">UDP-N-acetylglucosamine enolpyruvyl transferase</fullName>
        <shortName evidence="1">EPT</shortName>
    </alternativeName>
</protein>
<accession>A1JRA1</accession>
<organism>
    <name type="scientific">Yersinia enterocolitica serotype O:8 / biotype 1B (strain NCTC 13174 / 8081)</name>
    <dbReference type="NCBI Taxonomy" id="393305"/>
    <lineage>
        <taxon>Bacteria</taxon>
        <taxon>Pseudomonadati</taxon>
        <taxon>Pseudomonadota</taxon>
        <taxon>Gammaproteobacteria</taxon>
        <taxon>Enterobacterales</taxon>
        <taxon>Yersiniaceae</taxon>
        <taxon>Yersinia</taxon>
    </lineage>
</organism>
<sequence>MDKFRVQGRTRLSGEVTISGAKNAALPILFAALLAEDPVELQNVPKLKDIDTTIKLLSQLGVKIERDAASGSVFVDASGVDEFCAPYDLVKTMRASIWALGPLVARFGKGQVSLPGGCAIGARPVDLHITGLEQLSAEIKLEEGYVKASVNGRLKAAHIVMDKVSVGATVTIMSAATLAEGTTVIENAAREPEIVDTANFLNTLGAKITGAGTDRITIEGVARLGGGVYRVLPDRIETGTFLVAAAISGGKVVCRQTRPDTLDAVLAKLREAGADIEVGDDWISLDMHGKRPKAVTLRTAPHPGFPTDMQAQFSLLNLVAEGTGVITETIFENRFMHVPELIRMGAHAEIESNTVICYGVEQLSGAQVMATDLRASASLVLAGCIADGVTIVDRIYHIDRGYEGIEDKLRALGAKIERVKGE</sequence>
<proteinExistence type="inferred from homology"/>
<feature type="chain" id="PRO_1000023123" description="UDP-N-acetylglucosamine 1-carboxyvinyltransferase">
    <location>
        <begin position="1"/>
        <end position="422"/>
    </location>
</feature>
<feature type="active site" description="Proton donor" evidence="1">
    <location>
        <position position="118"/>
    </location>
</feature>
<feature type="binding site" evidence="1">
    <location>
        <begin position="22"/>
        <end position="23"/>
    </location>
    <ligand>
        <name>phosphoenolpyruvate</name>
        <dbReference type="ChEBI" id="CHEBI:58702"/>
    </ligand>
</feature>
<feature type="binding site" evidence="1">
    <location>
        <position position="94"/>
    </location>
    <ligand>
        <name>UDP-N-acetyl-alpha-D-glucosamine</name>
        <dbReference type="ChEBI" id="CHEBI:57705"/>
    </ligand>
</feature>
<feature type="binding site" evidence="1">
    <location>
        <begin position="123"/>
        <end position="127"/>
    </location>
    <ligand>
        <name>UDP-N-acetyl-alpha-D-glucosamine</name>
        <dbReference type="ChEBI" id="CHEBI:57705"/>
    </ligand>
</feature>
<feature type="binding site" evidence="1">
    <location>
        <begin position="163"/>
        <end position="166"/>
    </location>
    <ligand>
        <name>UDP-N-acetyl-alpha-D-glucosamine</name>
        <dbReference type="ChEBI" id="CHEBI:57705"/>
    </ligand>
</feature>
<feature type="binding site" evidence="1">
    <location>
        <position position="308"/>
    </location>
    <ligand>
        <name>UDP-N-acetyl-alpha-D-glucosamine</name>
        <dbReference type="ChEBI" id="CHEBI:57705"/>
    </ligand>
</feature>
<feature type="binding site" evidence="1">
    <location>
        <position position="330"/>
    </location>
    <ligand>
        <name>UDP-N-acetyl-alpha-D-glucosamine</name>
        <dbReference type="ChEBI" id="CHEBI:57705"/>
    </ligand>
</feature>
<feature type="modified residue" description="2-(S-cysteinyl)pyruvic acid O-phosphothioketal" evidence="1">
    <location>
        <position position="118"/>
    </location>
</feature>